<accession>C5D585</accession>
<evidence type="ECO:0000255" key="1">
    <source>
        <dbReference type="HAMAP-Rule" id="MF_02104"/>
    </source>
</evidence>
<name>LUTC_GEOSW</name>
<feature type="chain" id="PRO_0000384012" description="Lactate utilization protein C">
    <location>
        <begin position="1"/>
        <end position="241"/>
    </location>
</feature>
<gene>
    <name evidence="1" type="primary">lutC</name>
    <name type="ordered locus">GWCH70_0390</name>
</gene>
<protein>
    <recommendedName>
        <fullName evidence="1">Lactate utilization protein C</fullName>
    </recommendedName>
</protein>
<proteinExistence type="inferred from homology"/>
<organism>
    <name type="scientific">Geobacillus sp. (strain WCH70)</name>
    <dbReference type="NCBI Taxonomy" id="471223"/>
    <lineage>
        <taxon>Bacteria</taxon>
        <taxon>Bacillati</taxon>
        <taxon>Bacillota</taxon>
        <taxon>Bacilli</taxon>
        <taxon>Bacillales</taxon>
        <taxon>Anoxybacillaceae</taxon>
        <taxon>Geobacillus</taxon>
    </lineage>
</organism>
<comment type="function">
    <text evidence="1">Is involved in L-lactate degradation and allows cells to grow with lactate as the sole carbon source.</text>
</comment>
<comment type="similarity">
    <text evidence="1">Belongs to the LutC/YkgG family.</text>
</comment>
<sequence>MMQTGTIHNRDKFLQTVANRLGRHQRTSGVSRPHWRHQPQWTVFQGYSQDELLEALKAQCPRIHTQCVETTAVELKETLKEVVAKHGGGPIVTWDDPRFDEYGLTRLLRNEWPNENVDVHIWDASAGRKNIDYAEQANVGITFSDITLAESGTVVLFSGNGKGRTVSFLPKTYIAIIAKSTIVPRMTQAAAYIHEQIEKGHLIPSCINFITGPSNSADIEMNLVVGVHGPMKATYIVVTDR</sequence>
<reference key="1">
    <citation type="submission" date="2009-06" db="EMBL/GenBank/DDBJ databases">
        <title>Complete sequence of chromosome of Geopacillus sp. WCH70.</title>
        <authorList>
            <consortium name="US DOE Joint Genome Institute"/>
            <person name="Lucas S."/>
            <person name="Copeland A."/>
            <person name="Lapidus A."/>
            <person name="Glavina del Rio T."/>
            <person name="Dalin E."/>
            <person name="Tice H."/>
            <person name="Bruce D."/>
            <person name="Goodwin L."/>
            <person name="Pitluck S."/>
            <person name="Chertkov O."/>
            <person name="Brettin T."/>
            <person name="Detter J.C."/>
            <person name="Han C."/>
            <person name="Larimer F."/>
            <person name="Land M."/>
            <person name="Hauser L."/>
            <person name="Kyrpides N."/>
            <person name="Mikhailova N."/>
            <person name="Brumm P."/>
            <person name="Mead D.A."/>
            <person name="Richardson P."/>
        </authorList>
    </citation>
    <scope>NUCLEOTIDE SEQUENCE [LARGE SCALE GENOMIC DNA]</scope>
    <source>
        <strain>WCH70</strain>
    </source>
</reference>
<dbReference type="EMBL" id="CP001638">
    <property type="protein sequence ID" value="ACS23311.1"/>
    <property type="molecule type" value="Genomic_DNA"/>
</dbReference>
<dbReference type="SMR" id="C5D585"/>
<dbReference type="STRING" id="471223.GWCH70_0390"/>
<dbReference type="KEGG" id="gwc:GWCH70_0390"/>
<dbReference type="eggNOG" id="COG1556">
    <property type="taxonomic scope" value="Bacteria"/>
</dbReference>
<dbReference type="HOGENOM" id="CLU_090664_1_0_9"/>
<dbReference type="GO" id="GO:0006089">
    <property type="term" value="P:lactate metabolic process"/>
    <property type="evidence" value="ECO:0007669"/>
    <property type="project" value="UniProtKB-UniRule"/>
</dbReference>
<dbReference type="Gene3D" id="3.40.50.10420">
    <property type="entry name" value="NagB/RpiA/CoA transferase-like"/>
    <property type="match status" value="1"/>
</dbReference>
<dbReference type="HAMAP" id="MF_02104">
    <property type="entry name" value="LutC"/>
    <property type="match status" value="1"/>
</dbReference>
<dbReference type="InterPro" id="IPR024185">
    <property type="entry name" value="FTHF_cligase-like_sf"/>
</dbReference>
<dbReference type="InterPro" id="IPR003741">
    <property type="entry name" value="LUD_dom"/>
</dbReference>
<dbReference type="InterPro" id="IPR022823">
    <property type="entry name" value="LutC"/>
</dbReference>
<dbReference type="InterPro" id="IPR037171">
    <property type="entry name" value="NagB/RpiA_transferase-like"/>
</dbReference>
<dbReference type="PANTHER" id="PTHR43682">
    <property type="entry name" value="LACTATE UTILIZATION PROTEIN C"/>
    <property type="match status" value="1"/>
</dbReference>
<dbReference type="PANTHER" id="PTHR43682:SF1">
    <property type="entry name" value="LACTATE UTILIZATION PROTEIN C"/>
    <property type="match status" value="1"/>
</dbReference>
<dbReference type="Pfam" id="PF02589">
    <property type="entry name" value="LUD_dom"/>
    <property type="match status" value="1"/>
</dbReference>
<dbReference type="SUPFAM" id="SSF100950">
    <property type="entry name" value="NagB/RpiA/CoA transferase-like"/>
    <property type="match status" value="1"/>
</dbReference>